<reference key="1">
    <citation type="journal article" date="2008" name="J. Bacteriol.">
        <title>Insights into the environmental resistance gene pool from the genome sequence of the multidrug-resistant environmental isolate Escherichia coli SMS-3-5.</title>
        <authorList>
            <person name="Fricke W.F."/>
            <person name="Wright M.S."/>
            <person name="Lindell A.H."/>
            <person name="Harkins D.M."/>
            <person name="Baker-Austin C."/>
            <person name="Ravel J."/>
            <person name="Stepanauskas R."/>
        </authorList>
    </citation>
    <scope>NUCLEOTIDE SEQUENCE [LARGE SCALE GENOMIC DNA]</scope>
    <source>
        <strain>SMS-3-5 / SECEC</strain>
    </source>
</reference>
<feature type="chain" id="PRO_1000186971" description="3-phenylpropionate-dihydrodiol/cinnamic acid-dihydrodiol dehydrogenase">
    <location>
        <begin position="1"/>
        <end position="270"/>
    </location>
</feature>
<feature type="active site" description="Proton acceptor" evidence="1">
    <location>
        <position position="156"/>
    </location>
</feature>
<feature type="binding site" evidence="1">
    <location>
        <begin position="10"/>
        <end position="34"/>
    </location>
    <ligand>
        <name>NAD(+)</name>
        <dbReference type="ChEBI" id="CHEBI:57540"/>
    </ligand>
</feature>
<feature type="binding site" evidence="1">
    <location>
        <position position="143"/>
    </location>
    <ligand>
        <name>substrate</name>
    </ligand>
</feature>
<gene>
    <name evidence="1" type="primary">hcaB</name>
    <name type="ordered locus">EcSMS35_2694</name>
</gene>
<protein>
    <recommendedName>
        <fullName evidence="1">3-phenylpropionate-dihydrodiol/cinnamic acid-dihydrodiol dehydrogenase</fullName>
        <ecNumber evidence="1">1.3.1.87</ecNumber>
    </recommendedName>
    <alternativeName>
        <fullName evidence="1">2,3-dihydroxy-2,3-dihydrophenylpropionate dehydrogenase</fullName>
    </alternativeName>
    <alternativeName>
        <fullName evidence="1">3-(cis-5,6-dihydroxycyclohexa-1,3-dien-1-yl)propanoate dehydrogenase</fullName>
    </alternativeName>
    <alternativeName>
        <fullName evidence="1">CI-dihydrodiol dehydrogenase</fullName>
    </alternativeName>
    <alternativeName>
        <fullName evidence="1">Cis-3-(2-carboxyethenyl)-3,5-cyclohexadiene-1,2-diol dehydrogenase</fullName>
    </alternativeName>
    <alternativeName>
        <fullName evidence="1">Cis-3-(2-carboxyethyl)-3,5-cyclohexadiene-1,2-diol dehydrogenase</fullName>
    </alternativeName>
    <alternativeName>
        <fullName evidence="1">PP-dihydrodiol dehydrogenase</fullName>
    </alternativeName>
</protein>
<organism>
    <name type="scientific">Escherichia coli (strain SMS-3-5 / SECEC)</name>
    <dbReference type="NCBI Taxonomy" id="439855"/>
    <lineage>
        <taxon>Bacteria</taxon>
        <taxon>Pseudomonadati</taxon>
        <taxon>Pseudomonadota</taxon>
        <taxon>Gammaproteobacteria</taxon>
        <taxon>Enterobacterales</taxon>
        <taxon>Enterobacteriaceae</taxon>
        <taxon>Escherichia</taxon>
    </lineage>
</organism>
<name>HCAB_ECOSM</name>
<dbReference type="EC" id="1.3.1.87" evidence="1"/>
<dbReference type="EMBL" id="CP000970">
    <property type="protein sequence ID" value="ACB19294.1"/>
    <property type="molecule type" value="Genomic_DNA"/>
</dbReference>
<dbReference type="RefSeq" id="WP_001281368.1">
    <property type="nucleotide sequence ID" value="NC_010498.1"/>
</dbReference>
<dbReference type="SMR" id="B1LNJ7"/>
<dbReference type="KEGG" id="ecm:EcSMS35_2694"/>
<dbReference type="HOGENOM" id="CLU_010194_1_0_6"/>
<dbReference type="UniPathway" id="UPA00714"/>
<dbReference type="Proteomes" id="UP000007011">
    <property type="component" value="Chromosome"/>
</dbReference>
<dbReference type="GO" id="GO:0018498">
    <property type="term" value="F:2,3-dihydroxy-2,3-dihydro-phenylpropionate dehydrogenase activity"/>
    <property type="evidence" value="ECO:0007669"/>
    <property type="project" value="UniProtKB-UniRule"/>
</dbReference>
<dbReference type="GO" id="GO:0019380">
    <property type="term" value="P:3-phenylpropionate catabolic process"/>
    <property type="evidence" value="ECO:0007669"/>
    <property type="project" value="UniProtKB-UniRule"/>
</dbReference>
<dbReference type="CDD" id="cd05348">
    <property type="entry name" value="BphB-like_SDR_c"/>
    <property type="match status" value="1"/>
</dbReference>
<dbReference type="FunFam" id="3.40.50.720:FF:000151">
    <property type="entry name" value="3-phenylpropionate-dihydrodiol/cinnamic acid-dihydrodiol dehydrogenase"/>
    <property type="match status" value="1"/>
</dbReference>
<dbReference type="Gene3D" id="3.40.50.720">
    <property type="entry name" value="NAD(P)-binding Rossmann-like Domain"/>
    <property type="match status" value="1"/>
</dbReference>
<dbReference type="HAMAP" id="MF_01647">
    <property type="entry name" value="HcaB"/>
    <property type="match status" value="1"/>
</dbReference>
<dbReference type="InterPro" id="IPR047950">
    <property type="entry name" value="BphB-like_SDR"/>
</dbReference>
<dbReference type="InterPro" id="IPR023643">
    <property type="entry name" value="Dihydrodiol_DH_HcaB"/>
</dbReference>
<dbReference type="InterPro" id="IPR036291">
    <property type="entry name" value="NAD(P)-bd_dom_sf"/>
</dbReference>
<dbReference type="InterPro" id="IPR020904">
    <property type="entry name" value="Sc_DH/Rdtase_CS"/>
</dbReference>
<dbReference type="InterPro" id="IPR002347">
    <property type="entry name" value="SDR_fam"/>
</dbReference>
<dbReference type="NCBIfam" id="NF042950">
    <property type="entry name" value="3PPDhyd_Dh_HcaB"/>
    <property type="match status" value="1"/>
</dbReference>
<dbReference type="NCBIfam" id="NF004849">
    <property type="entry name" value="PRK06200.1"/>
    <property type="match status" value="1"/>
</dbReference>
<dbReference type="PANTHER" id="PTHR43943:SF17">
    <property type="entry name" value="3-PHENYLPROPIONATE-DIHYDRODIOL_CINNAMIC ACID-DIHYDRODIOL DEHYDROGENASE"/>
    <property type="match status" value="1"/>
</dbReference>
<dbReference type="PANTHER" id="PTHR43943">
    <property type="entry name" value="DEHYDROGENASE/REDUCTASE (SDR FAMILY) MEMBER 4"/>
    <property type="match status" value="1"/>
</dbReference>
<dbReference type="Pfam" id="PF00106">
    <property type="entry name" value="adh_short"/>
    <property type="match status" value="1"/>
</dbReference>
<dbReference type="PRINTS" id="PR00081">
    <property type="entry name" value="GDHRDH"/>
</dbReference>
<dbReference type="PRINTS" id="PR00080">
    <property type="entry name" value="SDRFAMILY"/>
</dbReference>
<dbReference type="SUPFAM" id="SSF51735">
    <property type="entry name" value="NAD(P)-binding Rossmann-fold domains"/>
    <property type="match status" value="1"/>
</dbReference>
<dbReference type="PROSITE" id="PS00061">
    <property type="entry name" value="ADH_SHORT"/>
    <property type="match status" value="1"/>
</dbReference>
<sequence>MSDLHNESIFITGGGSGLGLALVERFIEEGAQVATLELSAAKVASLRQRFGEHILAVEGNVTCYADYQRALDQILTRSGKLDCFIGNAGIWDHNASLVNTPAETLETGFHELFNVNVLGYLLGAKACAPALIASEGSMIFTLSNAAWYPGGGGPLYTASKHAATGLIRQLAYELAPKVRVNGVGPCGMASDLRGPQALGQSETSIMQSLTPEKIAAILPLQFFPQPADFTGPYVMLASRRNNRALSGVMINADAGLAIRGIRHVAAGLDL</sequence>
<comment type="function">
    <text evidence="1">Converts 3-phenylpropionate-dihydrodiol (PP-dihydrodiol) and cinnamic acid-dihydrodiol (CI-dihydrodiol) into 3-(2,3-dihydroxylphenyl)propanoic acid (DHPP) and 2,3-dihydroxicinnamic acid (DHCI), respectively.</text>
</comment>
<comment type="catalytic activity">
    <reaction evidence="1">
        <text>3-(cis-5,6-dihydroxycyclohexa-1,3-dien-1-yl)propanoate + NAD(+) = 3-(2,3-dihydroxyphenyl)propanoate + NADH + H(+)</text>
        <dbReference type="Rhea" id="RHEA:25062"/>
        <dbReference type="ChEBI" id="CHEBI:15378"/>
        <dbReference type="ChEBI" id="CHEBI:46951"/>
        <dbReference type="ChEBI" id="CHEBI:57540"/>
        <dbReference type="ChEBI" id="CHEBI:57945"/>
        <dbReference type="ChEBI" id="CHEBI:60087"/>
        <dbReference type="EC" id="1.3.1.87"/>
    </reaction>
</comment>
<comment type="catalytic activity">
    <reaction evidence="1">
        <text>(2E)-3-(cis-5,6-dihydroxycyclohexa-1,3-dien-1-yl)prop-2-enoate + NAD(+) = (2E)-3-(2,3-dihydroxyphenyl)prop-2-enoate + NADH + H(+)</text>
        <dbReference type="Rhea" id="RHEA:25066"/>
        <dbReference type="ChEBI" id="CHEBI:15378"/>
        <dbReference type="ChEBI" id="CHEBI:57540"/>
        <dbReference type="ChEBI" id="CHEBI:57945"/>
        <dbReference type="ChEBI" id="CHEBI:58642"/>
        <dbReference type="ChEBI" id="CHEBI:61451"/>
        <dbReference type="EC" id="1.3.1.87"/>
    </reaction>
</comment>
<comment type="pathway">
    <text evidence="1">Aromatic compound metabolism; 3-phenylpropanoate degradation.</text>
</comment>
<comment type="similarity">
    <text evidence="1">Belongs to the short-chain dehydrogenases/reductases (SDR) family.</text>
</comment>
<proteinExistence type="inferred from homology"/>
<keyword id="KW-0058">Aromatic hydrocarbons catabolism</keyword>
<keyword id="KW-0520">NAD</keyword>
<keyword id="KW-0560">Oxidoreductase</keyword>
<accession>B1LNJ7</accession>
<evidence type="ECO:0000255" key="1">
    <source>
        <dbReference type="HAMAP-Rule" id="MF_01647"/>
    </source>
</evidence>